<sequence>MASMAGPDHLFNLRNHFYLGAYQAAINNSEIPNLSQEDIVERDCLVHRAYIALGSYQLVISEIDEAAATPLQAVKLLAMYLSSPENKESTISSLREWLADPTVGNNAIIRLIAGTIFMHEEDYNEALKHTHSGGTMDLHALNVQIFIKMHRSDFAEKQLRVMQQIDEDHTLTQLASAWLNLAVGGSKIQEAYLIFQDFSEKYPMTSLILNGKAVCCMHMGNFEEAETLLLEALNKDAKDPETLANLVVCSLHVGKSSSRYLNQLKLSHPEHVLVKRAASAEDNFERALQSFA</sequence>
<comment type="function">
    <text evidence="1">The coatomer is a cytosolic protein complex that binds to dilysine motifs and reversibly associates with Golgi non-clathrin-coated vesicles, which further mediate biosynthetic protein transport from the ER, via the Golgi up to the trans Golgi network. The coatomer complex is required for budding from Golgi membranes, and is essential for the retrograde Golgi-to-ER transport of dilysine-tagged proteins (By similarity).</text>
</comment>
<comment type="subunit">
    <text evidence="1">Oligomeric complex that consists of at least the alpha, beta, beta', gamma, delta, epsilon and zeta subunits.</text>
</comment>
<comment type="subcellular location">
    <subcellularLocation>
        <location evidence="1">Cytoplasm</location>
    </subcellularLocation>
    <subcellularLocation>
        <location evidence="1">Golgi apparatus membrane</location>
        <topology evidence="1">Peripheral membrane protein</topology>
        <orientation evidence="1">Cytoplasmic side</orientation>
    </subcellularLocation>
    <subcellularLocation>
        <location evidence="1">Cytoplasmic vesicle</location>
        <location evidence="1">COPI-coated vesicle membrane</location>
        <topology evidence="1">Peripheral membrane protein</topology>
        <orientation evidence="1">Cytoplasmic side</orientation>
    </subcellularLocation>
    <text evidence="1">The coatomer is cytoplasmic or polymerized on the cytoplasmic side of the Golgi, as well as on the vesicles/buds originating from it.</text>
</comment>
<comment type="similarity">
    <text evidence="2">Belongs to the COPE family.</text>
</comment>
<comment type="sequence caution" evidence="2">
    <conflict type="erroneous initiation">
        <sequence resource="EMBL-CDS" id="AAM65018"/>
    </conflict>
</comment>
<feature type="chain" id="PRO_0000285624" description="Coatomer subunit epsilon-1">
    <location>
        <begin position="1"/>
        <end position="292"/>
    </location>
</feature>
<name>COPE1_ARATH</name>
<evidence type="ECO:0000250" key="1"/>
<evidence type="ECO:0000305" key="2"/>
<accession>Q9SA78</accession>
<accession>Q8LB21</accession>
<organism>
    <name type="scientific">Arabidopsis thaliana</name>
    <name type="common">Mouse-ear cress</name>
    <dbReference type="NCBI Taxonomy" id="3702"/>
    <lineage>
        <taxon>Eukaryota</taxon>
        <taxon>Viridiplantae</taxon>
        <taxon>Streptophyta</taxon>
        <taxon>Embryophyta</taxon>
        <taxon>Tracheophyta</taxon>
        <taxon>Spermatophyta</taxon>
        <taxon>Magnoliopsida</taxon>
        <taxon>eudicotyledons</taxon>
        <taxon>Gunneridae</taxon>
        <taxon>Pentapetalae</taxon>
        <taxon>rosids</taxon>
        <taxon>malvids</taxon>
        <taxon>Brassicales</taxon>
        <taxon>Brassicaceae</taxon>
        <taxon>Camelineae</taxon>
        <taxon>Arabidopsis</taxon>
    </lineage>
</organism>
<keyword id="KW-0963">Cytoplasm</keyword>
<keyword id="KW-0968">Cytoplasmic vesicle</keyword>
<keyword id="KW-0931">ER-Golgi transport</keyword>
<keyword id="KW-0333">Golgi apparatus</keyword>
<keyword id="KW-0472">Membrane</keyword>
<keyword id="KW-0653">Protein transport</keyword>
<keyword id="KW-1185">Reference proteome</keyword>
<keyword id="KW-0813">Transport</keyword>
<gene>
    <name type="ordered locus">At1g30630</name>
    <name type="ORF">T5I8.8</name>
</gene>
<proteinExistence type="evidence at transcript level"/>
<reference key="1">
    <citation type="journal article" date="2000" name="Nature">
        <title>Sequence and analysis of chromosome 1 of the plant Arabidopsis thaliana.</title>
        <authorList>
            <person name="Theologis A."/>
            <person name="Ecker J.R."/>
            <person name="Palm C.J."/>
            <person name="Federspiel N.A."/>
            <person name="Kaul S."/>
            <person name="White O."/>
            <person name="Alonso J."/>
            <person name="Altafi H."/>
            <person name="Araujo R."/>
            <person name="Bowman C.L."/>
            <person name="Brooks S.Y."/>
            <person name="Buehler E."/>
            <person name="Chan A."/>
            <person name="Chao Q."/>
            <person name="Chen H."/>
            <person name="Cheuk R.F."/>
            <person name="Chin C.W."/>
            <person name="Chung M.K."/>
            <person name="Conn L."/>
            <person name="Conway A.B."/>
            <person name="Conway A.R."/>
            <person name="Creasy T.H."/>
            <person name="Dewar K."/>
            <person name="Dunn P."/>
            <person name="Etgu P."/>
            <person name="Feldblyum T.V."/>
            <person name="Feng J.-D."/>
            <person name="Fong B."/>
            <person name="Fujii C.Y."/>
            <person name="Gill J.E."/>
            <person name="Goldsmith A.D."/>
            <person name="Haas B."/>
            <person name="Hansen N.F."/>
            <person name="Hughes B."/>
            <person name="Huizar L."/>
            <person name="Hunter J.L."/>
            <person name="Jenkins J."/>
            <person name="Johnson-Hopson C."/>
            <person name="Khan S."/>
            <person name="Khaykin E."/>
            <person name="Kim C.J."/>
            <person name="Koo H.L."/>
            <person name="Kremenetskaia I."/>
            <person name="Kurtz D.B."/>
            <person name="Kwan A."/>
            <person name="Lam B."/>
            <person name="Langin-Hooper S."/>
            <person name="Lee A."/>
            <person name="Lee J.M."/>
            <person name="Lenz C.A."/>
            <person name="Li J.H."/>
            <person name="Li Y.-P."/>
            <person name="Lin X."/>
            <person name="Liu S.X."/>
            <person name="Liu Z.A."/>
            <person name="Luros J.S."/>
            <person name="Maiti R."/>
            <person name="Marziali A."/>
            <person name="Militscher J."/>
            <person name="Miranda M."/>
            <person name="Nguyen M."/>
            <person name="Nierman W.C."/>
            <person name="Osborne B.I."/>
            <person name="Pai G."/>
            <person name="Peterson J."/>
            <person name="Pham P.K."/>
            <person name="Rizzo M."/>
            <person name="Rooney T."/>
            <person name="Rowley D."/>
            <person name="Sakano H."/>
            <person name="Salzberg S.L."/>
            <person name="Schwartz J.R."/>
            <person name="Shinn P."/>
            <person name="Southwick A.M."/>
            <person name="Sun H."/>
            <person name="Tallon L.J."/>
            <person name="Tambunga G."/>
            <person name="Toriumi M.J."/>
            <person name="Town C.D."/>
            <person name="Utterback T."/>
            <person name="Van Aken S."/>
            <person name="Vaysberg M."/>
            <person name="Vysotskaia V.S."/>
            <person name="Walker M."/>
            <person name="Wu D."/>
            <person name="Yu G."/>
            <person name="Fraser C.M."/>
            <person name="Venter J.C."/>
            <person name="Davis R.W."/>
        </authorList>
    </citation>
    <scope>NUCLEOTIDE SEQUENCE [LARGE SCALE GENOMIC DNA]</scope>
    <source>
        <strain>cv. Columbia</strain>
    </source>
</reference>
<reference key="2">
    <citation type="journal article" date="2017" name="Plant J.">
        <title>Araport11: a complete reannotation of the Arabidopsis thaliana reference genome.</title>
        <authorList>
            <person name="Cheng C.Y."/>
            <person name="Krishnakumar V."/>
            <person name="Chan A.P."/>
            <person name="Thibaud-Nissen F."/>
            <person name="Schobel S."/>
            <person name="Town C.D."/>
        </authorList>
    </citation>
    <scope>GENOME REANNOTATION</scope>
    <source>
        <strain>cv. Columbia</strain>
    </source>
</reference>
<reference key="3">
    <citation type="journal article" date="2003" name="Science">
        <title>Empirical analysis of transcriptional activity in the Arabidopsis genome.</title>
        <authorList>
            <person name="Yamada K."/>
            <person name="Lim J."/>
            <person name="Dale J.M."/>
            <person name="Chen H."/>
            <person name="Shinn P."/>
            <person name="Palm C.J."/>
            <person name="Southwick A.M."/>
            <person name="Wu H.C."/>
            <person name="Kim C.J."/>
            <person name="Nguyen M."/>
            <person name="Pham P.K."/>
            <person name="Cheuk R.F."/>
            <person name="Karlin-Newmann G."/>
            <person name="Liu S.X."/>
            <person name="Lam B."/>
            <person name="Sakano H."/>
            <person name="Wu T."/>
            <person name="Yu G."/>
            <person name="Miranda M."/>
            <person name="Quach H.L."/>
            <person name="Tripp M."/>
            <person name="Chang C.H."/>
            <person name="Lee J.M."/>
            <person name="Toriumi M.J."/>
            <person name="Chan M.M."/>
            <person name="Tang C.C."/>
            <person name="Onodera C.S."/>
            <person name="Deng J.M."/>
            <person name="Akiyama K."/>
            <person name="Ansari Y."/>
            <person name="Arakawa T."/>
            <person name="Banh J."/>
            <person name="Banno F."/>
            <person name="Bowser L."/>
            <person name="Brooks S.Y."/>
            <person name="Carninci P."/>
            <person name="Chao Q."/>
            <person name="Choy N."/>
            <person name="Enju A."/>
            <person name="Goldsmith A.D."/>
            <person name="Gurjal M."/>
            <person name="Hansen N.F."/>
            <person name="Hayashizaki Y."/>
            <person name="Johnson-Hopson C."/>
            <person name="Hsuan V.W."/>
            <person name="Iida K."/>
            <person name="Karnes M."/>
            <person name="Khan S."/>
            <person name="Koesema E."/>
            <person name="Ishida J."/>
            <person name="Jiang P.X."/>
            <person name="Jones T."/>
            <person name="Kawai J."/>
            <person name="Kamiya A."/>
            <person name="Meyers C."/>
            <person name="Nakajima M."/>
            <person name="Narusaka M."/>
            <person name="Seki M."/>
            <person name="Sakurai T."/>
            <person name="Satou M."/>
            <person name="Tamse R."/>
            <person name="Vaysberg M."/>
            <person name="Wallender E.K."/>
            <person name="Wong C."/>
            <person name="Yamamura Y."/>
            <person name="Yuan S."/>
            <person name="Shinozaki K."/>
            <person name="Davis R.W."/>
            <person name="Theologis A."/>
            <person name="Ecker J.R."/>
        </authorList>
    </citation>
    <scope>NUCLEOTIDE SEQUENCE [LARGE SCALE MRNA]</scope>
    <source>
        <strain>cv. Columbia</strain>
    </source>
</reference>
<reference key="4">
    <citation type="submission" date="2002-03" db="EMBL/GenBank/DDBJ databases">
        <title>Full-length cDNA from Arabidopsis thaliana.</title>
        <authorList>
            <person name="Brover V.V."/>
            <person name="Troukhan M.E."/>
            <person name="Alexandrov N.A."/>
            <person name="Lu Y.-P."/>
            <person name="Flavell R.B."/>
            <person name="Feldmann K.A."/>
        </authorList>
    </citation>
    <scope>NUCLEOTIDE SEQUENCE [LARGE SCALE MRNA]</scope>
</reference>
<dbReference type="EMBL" id="AC007060">
    <property type="protein sequence ID" value="AAD25750.1"/>
    <property type="molecule type" value="Genomic_DNA"/>
</dbReference>
<dbReference type="EMBL" id="CP002684">
    <property type="protein sequence ID" value="AEE31254.1"/>
    <property type="molecule type" value="Genomic_DNA"/>
</dbReference>
<dbReference type="EMBL" id="AF348588">
    <property type="protein sequence ID" value="AAK15559.1"/>
    <property type="molecule type" value="mRNA"/>
</dbReference>
<dbReference type="EMBL" id="AF370325">
    <property type="protein sequence ID" value="AAK44140.1"/>
    <property type="molecule type" value="mRNA"/>
</dbReference>
<dbReference type="EMBL" id="AY063113">
    <property type="protein sequence ID" value="AAL34287.1"/>
    <property type="molecule type" value="mRNA"/>
</dbReference>
<dbReference type="EMBL" id="AY087474">
    <property type="protein sequence ID" value="AAM65018.1"/>
    <property type="status" value="ALT_INIT"/>
    <property type="molecule type" value="mRNA"/>
</dbReference>
<dbReference type="PIR" id="F86431">
    <property type="entry name" value="F86431"/>
</dbReference>
<dbReference type="RefSeq" id="NP_174351.1">
    <property type="nucleotide sequence ID" value="NM_102800.4"/>
</dbReference>
<dbReference type="SMR" id="Q9SA78"/>
<dbReference type="BioGRID" id="25178">
    <property type="interactions" value="18"/>
</dbReference>
<dbReference type="FunCoup" id="Q9SA78">
    <property type="interactions" value="4542"/>
</dbReference>
<dbReference type="STRING" id="3702.Q9SA78"/>
<dbReference type="iPTMnet" id="Q9SA78"/>
<dbReference type="PaxDb" id="3702-AT1G30630.1"/>
<dbReference type="ProteomicsDB" id="241167"/>
<dbReference type="DNASU" id="839943"/>
<dbReference type="EnsemblPlants" id="AT1G30630.1">
    <property type="protein sequence ID" value="AT1G30630.1"/>
    <property type="gene ID" value="AT1G30630"/>
</dbReference>
<dbReference type="GeneID" id="839943"/>
<dbReference type="Gramene" id="AT1G30630.1">
    <property type="protein sequence ID" value="AT1G30630.1"/>
    <property type="gene ID" value="AT1G30630"/>
</dbReference>
<dbReference type="KEGG" id="ath:AT1G30630"/>
<dbReference type="Araport" id="AT1G30630"/>
<dbReference type="TAIR" id="AT1G30630"/>
<dbReference type="eggNOG" id="KOG3081">
    <property type="taxonomic scope" value="Eukaryota"/>
</dbReference>
<dbReference type="HOGENOM" id="CLU_049363_0_0_1"/>
<dbReference type="InParanoid" id="Q9SA78"/>
<dbReference type="OMA" id="MIVLSQH"/>
<dbReference type="OrthoDB" id="310217at2759"/>
<dbReference type="PhylomeDB" id="Q9SA78"/>
<dbReference type="PRO" id="PR:Q9SA78"/>
<dbReference type="Proteomes" id="UP000006548">
    <property type="component" value="Chromosome 1"/>
</dbReference>
<dbReference type="ExpressionAtlas" id="Q9SA78">
    <property type="expression patterns" value="baseline and differential"/>
</dbReference>
<dbReference type="GO" id="GO:0030663">
    <property type="term" value="C:COPI-coated vesicle membrane"/>
    <property type="evidence" value="ECO:0007669"/>
    <property type="project" value="UniProtKB-SubCell"/>
</dbReference>
<dbReference type="GO" id="GO:0000139">
    <property type="term" value="C:Golgi membrane"/>
    <property type="evidence" value="ECO:0007669"/>
    <property type="project" value="UniProtKB-SubCell"/>
</dbReference>
<dbReference type="GO" id="GO:0000325">
    <property type="term" value="C:plant-type vacuole"/>
    <property type="evidence" value="ECO:0007005"/>
    <property type="project" value="TAIR"/>
</dbReference>
<dbReference type="GO" id="GO:0005198">
    <property type="term" value="F:structural molecule activity"/>
    <property type="evidence" value="ECO:0007669"/>
    <property type="project" value="InterPro"/>
</dbReference>
<dbReference type="GO" id="GO:0015031">
    <property type="term" value="P:protein transport"/>
    <property type="evidence" value="ECO:0007669"/>
    <property type="project" value="UniProtKB-KW"/>
</dbReference>
<dbReference type="GO" id="GO:0006890">
    <property type="term" value="P:retrograde vesicle-mediated transport, Golgi to endoplasmic reticulum"/>
    <property type="evidence" value="ECO:0007669"/>
    <property type="project" value="InterPro"/>
</dbReference>
<dbReference type="FunFam" id="1.25.40.10:FF:000140">
    <property type="entry name" value="Coatomer subunit epsilon"/>
    <property type="match status" value="1"/>
</dbReference>
<dbReference type="Gene3D" id="1.25.40.10">
    <property type="entry name" value="Tetratricopeptide repeat domain"/>
    <property type="match status" value="1"/>
</dbReference>
<dbReference type="InterPro" id="IPR006822">
    <property type="entry name" value="Coatomer_esu"/>
</dbReference>
<dbReference type="InterPro" id="IPR011990">
    <property type="entry name" value="TPR-like_helical_dom_sf"/>
</dbReference>
<dbReference type="PANTHER" id="PTHR10805">
    <property type="entry name" value="COATOMER SUBUNIT EPSILON"/>
    <property type="match status" value="1"/>
</dbReference>
<dbReference type="PANTHER" id="PTHR10805:SF3">
    <property type="entry name" value="COATOMER SUBUNIT EPSILON-1"/>
    <property type="match status" value="1"/>
</dbReference>
<dbReference type="Pfam" id="PF04733">
    <property type="entry name" value="Coatomer_E"/>
    <property type="match status" value="1"/>
</dbReference>
<dbReference type="PIRSF" id="PIRSF016478">
    <property type="entry name" value="Coatomer_esu"/>
    <property type="match status" value="1"/>
</dbReference>
<dbReference type="SUPFAM" id="SSF48452">
    <property type="entry name" value="TPR-like"/>
    <property type="match status" value="1"/>
</dbReference>
<protein>
    <recommendedName>
        <fullName>Coatomer subunit epsilon-1</fullName>
    </recommendedName>
    <alternativeName>
        <fullName>Epsilon-coat protein 1</fullName>
        <shortName>Epsilon-COP 1</shortName>
    </alternativeName>
</protein>